<feature type="chain" id="PRO_0000112924" description="Ornithine carbamoyltransferase, catabolic">
    <location>
        <begin position="1"/>
        <end position="339"/>
    </location>
</feature>
<feature type="binding site" evidence="2">
    <location>
        <begin position="57"/>
        <end position="60"/>
    </location>
    <ligand>
        <name>carbamoyl phosphate</name>
        <dbReference type="ChEBI" id="CHEBI:58228"/>
    </ligand>
</feature>
<feature type="binding site" evidence="2">
    <location>
        <position position="84"/>
    </location>
    <ligand>
        <name>carbamoyl phosphate</name>
        <dbReference type="ChEBI" id="CHEBI:58228"/>
    </ligand>
</feature>
<feature type="binding site" evidence="2">
    <location>
        <position position="108"/>
    </location>
    <ligand>
        <name>carbamoyl phosphate</name>
        <dbReference type="ChEBI" id="CHEBI:58228"/>
    </ligand>
</feature>
<feature type="binding site" evidence="2">
    <location>
        <begin position="135"/>
        <end position="138"/>
    </location>
    <ligand>
        <name>carbamoyl phosphate</name>
        <dbReference type="ChEBI" id="CHEBI:58228"/>
    </ligand>
</feature>
<feature type="binding site" evidence="2">
    <location>
        <position position="167"/>
    </location>
    <ligand>
        <name>L-ornithine</name>
        <dbReference type="ChEBI" id="CHEBI:46911"/>
    </ligand>
</feature>
<feature type="binding site" evidence="2">
    <location>
        <position position="231"/>
    </location>
    <ligand>
        <name>L-ornithine</name>
        <dbReference type="ChEBI" id="CHEBI:46911"/>
    </ligand>
</feature>
<feature type="binding site" evidence="2">
    <location>
        <begin position="235"/>
        <end position="236"/>
    </location>
    <ligand>
        <name>L-ornithine</name>
        <dbReference type="ChEBI" id="CHEBI:46911"/>
    </ligand>
</feature>
<feature type="binding site" evidence="2">
    <location>
        <begin position="274"/>
        <end position="275"/>
    </location>
    <ligand>
        <name>carbamoyl phosphate</name>
        <dbReference type="ChEBI" id="CHEBI:58228"/>
    </ligand>
</feature>
<feature type="binding site" evidence="2">
    <location>
        <position position="319"/>
    </location>
    <ligand>
        <name>carbamoyl phosphate</name>
        <dbReference type="ChEBI" id="CHEBI:58228"/>
    </ligand>
</feature>
<feature type="sequence conflict" description="In Ref. 1; CAC41342." evidence="3" ref="1">
    <original>S</original>
    <variation>T</variation>
    <location>
        <position position="17"/>
    </location>
</feature>
<organism>
    <name type="scientific">Enterococcus faecalis (strain ATCC 700802 / V583)</name>
    <dbReference type="NCBI Taxonomy" id="226185"/>
    <lineage>
        <taxon>Bacteria</taxon>
        <taxon>Bacillati</taxon>
        <taxon>Bacillota</taxon>
        <taxon>Bacilli</taxon>
        <taxon>Lactobacillales</taxon>
        <taxon>Enterococcaceae</taxon>
        <taxon>Enterococcus</taxon>
    </lineage>
</organism>
<dbReference type="EC" id="2.1.3.3"/>
<dbReference type="EMBL" id="AJ312276">
    <property type="protein sequence ID" value="CAC41342.1"/>
    <property type="molecule type" value="Genomic_DNA"/>
</dbReference>
<dbReference type="EMBL" id="AE016830">
    <property type="protein sequence ID" value="AAO79980.1"/>
    <property type="molecule type" value="Genomic_DNA"/>
</dbReference>
<dbReference type="RefSeq" id="NP_813908.1">
    <property type="nucleotide sequence ID" value="NC_004668.1"/>
</dbReference>
<dbReference type="SMR" id="Q839Q5"/>
<dbReference type="STRING" id="226185.EF_0105"/>
<dbReference type="EnsemblBacteria" id="AAO79980">
    <property type="protein sequence ID" value="AAO79980"/>
    <property type="gene ID" value="EF_0105"/>
</dbReference>
<dbReference type="KEGG" id="efa:EF0105"/>
<dbReference type="PATRIC" id="fig|226185.45.peg.155"/>
<dbReference type="eggNOG" id="COG0078">
    <property type="taxonomic scope" value="Bacteria"/>
</dbReference>
<dbReference type="HOGENOM" id="CLU_043846_3_1_9"/>
<dbReference type="SABIO-RK" id="Q839Q5"/>
<dbReference type="UniPathway" id="UPA00254">
    <property type="reaction ID" value="UER00365"/>
</dbReference>
<dbReference type="Proteomes" id="UP000001415">
    <property type="component" value="Chromosome"/>
</dbReference>
<dbReference type="GO" id="GO:0005737">
    <property type="term" value="C:cytoplasm"/>
    <property type="evidence" value="ECO:0007669"/>
    <property type="project" value="UniProtKB-SubCell"/>
</dbReference>
<dbReference type="GO" id="GO:0016597">
    <property type="term" value="F:amino acid binding"/>
    <property type="evidence" value="ECO:0007669"/>
    <property type="project" value="InterPro"/>
</dbReference>
<dbReference type="GO" id="GO:0004585">
    <property type="term" value="F:ornithine carbamoyltransferase activity"/>
    <property type="evidence" value="ECO:0007669"/>
    <property type="project" value="UniProtKB-UniRule"/>
</dbReference>
<dbReference type="GO" id="GO:0042450">
    <property type="term" value="P:arginine biosynthetic process via ornithine"/>
    <property type="evidence" value="ECO:0007669"/>
    <property type="project" value="TreeGrafter"/>
</dbReference>
<dbReference type="GO" id="GO:0019547">
    <property type="term" value="P:arginine catabolic process to ornithine"/>
    <property type="evidence" value="ECO:0007669"/>
    <property type="project" value="UniProtKB-UniPathway"/>
</dbReference>
<dbReference type="GO" id="GO:0019240">
    <property type="term" value="P:citrulline biosynthetic process"/>
    <property type="evidence" value="ECO:0007669"/>
    <property type="project" value="TreeGrafter"/>
</dbReference>
<dbReference type="GO" id="GO:0006526">
    <property type="term" value="P:L-arginine biosynthetic process"/>
    <property type="evidence" value="ECO:0007669"/>
    <property type="project" value="UniProtKB-UniRule"/>
</dbReference>
<dbReference type="FunFam" id="3.40.50.1370:FF:000008">
    <property type="entry name" value="Ornithine carbamoyltransferase"/>
    <property type="match status" value="1"/>
</dbReference>
<dbReference type="Gene3D" id="3.40.50.1370">
    <property type="entry name" value="Aspartate/ornithine carbamoyltransferase"/>
    <property type="match status" value="2"/>
</dbReference>
<dbReference type="HAMAP" id="MF_01109">
    <property type="entry name" value="OTCase"/>
    <property type="match status" value="1"/>
</dbReference>
<dbReference type="InterPro" id="IPR006132">
    <property type="entry name" value="Asp/Orn_carbamoyltranf_P-bd"/>
</dbReference>
<dbReference type="InterPro" id="IPR006130">
    <property type="entry name" value="Asp/Orn_carbamoylTrfase"/>
</dbReference>
<dbReference type="InterPro" id="IPR036901">
    <property type="entry name" value="Asp/Orn_carbamoylTrfase_sf"/>
</dbReference>
<dbReference type="InterPro" id="IPR006131">
    <property type="entry name" value="Asp_carbamoyltransf_Asp/Orn-bd"/>
</dbReference>
<dbReference type="InterPro" id="IPR002292">
    <property type="entry name" value="Orn/put_carbamltrans"/>
</dbReference>
<dbReference type="InterPro" id="IPR024904">
    <property type="entry name" value="OTCase_ArgI"/>
</dbReference>
<dbReference type="NCBIfam" id="TIGR00658">
    <property type="entry name" value="orni_carb_tr"/>
    <property type="match status" value="1"/>
</dbReference>
<dbReference type="NCBIfam" id="NF001986">
    <property type="entry name" value="PRK00779.1"/>
    <property type="match status" value="1"/>
</dbReference>
<dbReference type="PANTHER" id="PTHR45753:SF1">
    <property type="entry name" value="ORNITHINE CARBAMOYLTRANSFERASE, CATABOLIC"/>
    <property type="match status" value="1"/>
</dbReference>
<dbReference type="PANTHER" id="PTHR45753">
    <property type="entry name" value="ORNITHINE CARBAMOYLTRANSFERASE, MITOCHONDRIAL"/>
    <property type="match status" value="1"/>
</dbReference>
<dbReference type="Pfam" id="PF00185">
    <property type="entry name" value="OTCace"/>
    <property type="match status" value="1"/>
</dbReference>
<dbReference type="Pfam" id="PF02729">
    <property type="entry name" value="OTCace_N"/>
    <property type="match status" value="1"/>
</dbReference>
<dbReference type="PRINTS" id="PR00100">
    <property type="entry name" value="AOTCASE"/>
</dbReference>
<dbReference type="PRINTS" id="PR00102">
    <property type="entry name" value="OTCASE"/>
</dbReference>
<dbReference type="SUPFAM" id="SSF53671">
    <property type="entry name" value="Aspartate/ornithine carbamoyltransferase"/>
    <property type="match status" value="1"/>
</dbReference>
<dbReference type="PROSITE" id="PS00097">
    <property type="entry name" value="CARBAMOYLTRANSFERASE"/>
    <property type="match status" value="1"/>
</dbReference>
<gene>
    <name type="primary">arcB</name>
    <name type="ordered locus">EF_0105</name>
</gene>
<accession>Q839Q5</accession>
<accession>Q93K66</accession>
<reference key="1">
    <citation type="journal article" date="1998" name="Eur. J. Biochem.">
        <title>Carbamate kinase from Enterococcus faecalis and Enterococcus faecium: cloning of the genes, studies on the enzyme expressed in Escherichia coli, and sequence similarity with N-acetyl-L-glutamate kinase.</title>
        <authorList>
            <person name="Marina A."/>
            <person name="Uriarte M."/>
            <person name="Barcelona B."/>
            <person name="Fresquet V."/>
            <person name="Cervera J."/>
            <person name="Rubio V."/>
        </authorList>
    </citation>
    <scope>NUCLEOTIDE SEQUENCE [GENOMIC DNA]</scope>
    <source>
        <strain>ATCC 29212 / DSM 2570</strain>
    </source>
</reference>
<reference key="2">
    <citation type="journal article" date="2003" name="Science">
        <title>Role of mobile DNA in the evolution of vancomycin-resistant Enterococcus faecalis.</title>
        <authorList>
            <person name="Paulsen I.T."/>
            <person name="Banerjei L."/>
            <person name="Myers G.S.A."/>
            <person name="Nelson K.E."/>
            <person name="Seshadri R."/>
            <person name="Read T.D."/>
            <person name="Fouts D.E."/>
            <person name="Eisen J.A."/>
            <person name="Gill S.R."/>
            <person name="Heidelberg J.F."/>
            <person name="Tettelin H."/>
            <person name="Dodson R.J."/>
            <person name="Umayam L.A."/>
            <person name="Brinkac L.M."/>
            <person name="Beanan M.J."/>
            <person name="Daugherty S.C."/>
            <person name="DeBoy R.T."/>
            <person name="Durkin S.A."/>
            <person name="Kolonay J.F."/>
            <person name="Madupu R."/>
            <person name="Nelson W.C."/>
            <person name="Vamathevan J.J."/>
            <person name="Tran B."/>
            <person name="Upton J."/>
            <person name="Hansen T."/>
            <person name="Shetty J."/>
            <person name="Khouri H.M."/>
            <person name="Utterback T.R."/>
            <person name="Radune D."/>
            <person name="Ketchum K.A."/>
            <person name="Dougherty B.A."/>
            <person name="Fraser C.M."/>
        </authorList>
    </citation>
    <scope>NUCLEOTIDE SEQUENCE [LARGE SCALE GENOMIC DNA]</scope>
    <source>
        <strain>ATCC 700802 / V583</strain>
    </source>
</reference>
<proteinExistence type="inferred from homology"/>
<comment type="function">
    <text evidence="1">Reversibly catalyzes the transfer of the carbamoyl group from carbamoyl phosphate (CP) to the N(epsilon) atom of ornithine (ORN) to produce L-citrulline.</text>
</comment>
<comment type="catalytic activity">
    <reaction>
        <text>carbamoyl phosphate + L-ornithine = L-citrulline + phosphate + H(+)</text>
        <dbReference type="Rhea" id="RHEA:19513"/>
        <dbReference type="ChEBI" id="CHEBI:15378"/>
        <dbReference type="ChEBI" id="CHEBI:43474"/>
        <dbReference type="ChEBI" id="CHEBI:46911"/>
        <dbReference type="ChEBI" id="CHEBI:57743"/>
        <dbReference type="ChEBI" id="CHEBI:58228"/>
        <dbReference type="EC" id="2.1.3.3"/>
    </reaction>
</comment>
<comment type="pathway">
    <text>Amino-acid degradation; L-arginine degradation via ADI pathway; carbamoyl phosphate from L-arginine: step 2/2.</text>
</comment>
<comment type="subcellular location">
    <subcellularLocation>
        <location evidence="1">Cytoplasm</location>
    </subcellularLocation>
</comment>
<comment type="similarity">
    <text evidence="3">Belongs to the aspartate/ornithine carbamoyltransferase superfamily. OTCase family.</text>
</comment>
<sequence length="339" mass="38029">MNSVFQGRSLLAEKDFSRAELEYLVDFSIHLKELKKKGIPHHYLEGKNIALLFEKTSTRTRSAFTTAAIDLGAHPEYLGANDIQLGKKESVEDTAIVLGSMFDGIEFRGFSQEVVEDLAKYSGVPVWNGLTDQWHPTQMIADFMTVKENFGRLEGITLVYVGDGRNNMANSLLVTGAILGVNVRICAPKELFPSDEVVNYAKEFAKESGAELMITDDVAKGVKGANVLYTDVWVSMGEEDKFEERVNLLKPYQINMAMLEKTENMDGDLIVLHCLPAFHDTKTQYGEMVAEKFGITEMEITDEVFRSKYGRQFEEAENRMHSIKAIMAATLGNLFIPRV</sequence>
<name>OTCC_ENTFA</name>
<protein>
    <recommendedName>
        <fullName>Ornithine carbamoyltransferase, catabolic</fullName>
        <shortName>OTCase</shortName>
        <ecNumber>2.1.3.3</ecNumber>
    </recommendedName>
</protein>
<evidence type="ECO:0000250" key="1"/>
<evidence type="ECO:0000255" key="2">
    <source>
        <dbReference type="HAMAP-Rule" id="MF_01109"/>
    </source>
</evidence>
<evidence type="ECO:0000305" key="3"/>
<keyword id="KW-0056">Arginine metabolism</keyword>
<keyword id="KW-0963">Cytoplasm</keyword>
<keyword id="KW-1185">Reference proteome</keyword>
<keyword id="KW-0808">Transferase</keyword>